<sequence length="510" mass="57011">MIWHVQNENFILDSTRIFMKAFHLLLFNGSFIFPECILIFGLILLLMIDLTSDQKDRPWFYFISSTSLVISITALLFRWREEPIISFSGNFQTNNFNEIFQFLILLCSTLCIPLSVEYIECTEMAITEFLLFVLTATLGGMFLCGANDLITIFVALECFSLCSYLLSGYTKRDLRSNEATMKYLLMGGASSSILVYGFSWLYGLSGGEIELQEIVNGLINTQMYNSPGISIALIFITVGLGFKLSLAPFHQWTPDVYEGSPTPVVAFLSVTSKVAALALATRILDIPFYFSSNEWHLLLEILAILSMILGNLLAITQTSMKRMLAYSSIGQIGYVIIGIIVGDSNDGYASMITYMLFYISMNLGTFACIVLFGLRTGTDNIRDYAGLYMKDPFLALSLALCLLSLGGLPPLAGFFGKLYLFWCGWQAGLYFLVSIGLLTSVLSIYYYLKIIKLLMTGRNQEITPYVRNYRRSPLRSNNSIELSMTVCVIASTILGISMNPILAIAQDTLF</sequence>
<feature type="chain" id="PRO_0000391274" description="NAD(P)H-quinone oxidoreductase subunit 2 B, chloroplastic">
    <location>
        <begin position="1"/>
        <end position="510"/>
    </location>
</feature>
<feature type="transmembrane region" description="Helical" evidence="1">
    <location>
        <begin position="31"/>
        <end position="51"/>
    </location>
</feature>
<feature type="transmembrane region" description="Helical" evidence="1">
    <location>
        <begin position="59"/>
        <end position="79"/>
    </location>
</feature>
<feature type="transmembrane region" description="Helical" evidence="1">
    <location>
        <begin position="99"/>
        <end position="119"/>
    </location>
</feature>
<feature type="transmembrane region" description="Helical" evidence="1">
    <location>
        <begin position="124"/>
        <end position="144"/>
    </location>
</feature>
<feature type="transmembrane region" description="Helical" evidence="1">
    <location>
        <begin position="149"/>
        <end position="169"/>
    </location>
</feature>
<feature type="transmembrane region" description="Helical" evidence="1">
    <location>
        <begin position="184"/>
        <end position="204"/>
    </location>
</feature>
<feature type="transmembrane region" description="Helical" evidence="1">
    <location>
        <begin position="229"/>
        <end position="249"/>
    </location>
</feature>
<feature type="transmembrane region" description="Helical" evidence="1">
    <location>
        <begin position="261"/>
        <end position="281"/>
    </location>
</feature>
<feature type="transmembrane region" description="Helical" evidence="1">
    <location>
        <begin position="295"/>
        <end position="315"/>
    </location>
</feature>
<feature type="transmembrane region" description="Helical" evidence="1">
    <location>
        <begin position="323"/>
        <end position="343"/>
    </location>
</feature>
<feature type="transmembrane region" description="Helical" evidence="1">
    <location>
        <begin position="354"/>
        <end position="374"/>
    </location>
</feature>
<feature type="transmembrane region" description="Helical" evidence="1">
    <location>
        <begin position="395"/>
        <end position="415"/>
    </location>
</feature>
<feature type="transmembrane region" description="Helical" evidence="1">
    <location>
        <begin position="418"/>
        <end position="438"/>
    </location>
</feature>
<feature type="transmembrane region" description="Helical" evidence="1">
    <location>
        <begin position="484"/>
        <end position="504"/>
    </location>
</feature>
<comment type="function">
    <text evidence="1">NDH shuttles electrons from NAD(P)H:plastoquinone, via FMN and iron-sulfur (Fe-S) centers, to quinones in the photosynthetic chain and possibly in a chloroplast respiratory chain. The immediate electron acceptor for the enzyme in this species is believed to be plastoquinone. Couples the redox reaction to proton translocation, and thus conserves the redox energy in a proton gradient.</text>
</comment>
<comment type="catalytic activity">
    <reaction evidence="1">
        <text>a plastoquinone + NADH + (n+1) H(+)(in) = a plastoquinol + NAD(+) + n H(+)(out)</text>
        <dbReference type="Rhea" id="RHEA:42608"/>
        <dbReference type="Rhea" id="RHEA-COMP:9561"/>
        <dbReference type="Rhea" id="RHEA-COMP:9562"/>
        <dbReference type="ChEBI" id="CHEBI:15378"/>
        <dbReference type="ChEBI" id="CHEBI:17757"/>
        <dbReference type="ChEBI" id="CHEBI:57540"/>
        <dbReference type="ChEBI" id="CHEBI:57945"/>
        <dbReference type="ChEBI" id="CHEBI:62192"/>
    </reaction>
</comment>
<comment type="catalytic activity">
    <reaction evidence="1">
        <text>a plastoquinone + NADPH + (n+1) H(+)(in) = a plastoquinol + NADP(+) + n H(+)(out)</text>
        <dbReference type="Rhea" id="RHEA:42612"/>
        <dbReference type="Rhea" id="RHEA-COMP:9561"/>
        <dbReference type="Rhea" id="RHEA-COMP:9562"/>
        <dbReference type="ChEBI" id="CHEBI:15378"/>
        <dbReference type="ChEBI" id="CHEBI:17757"/>
        <dbReference type="ChEBI" id="CHEBI:57783"/>
        <dbReference type="ChEBI" id="CHEBI:58349"/>
        <dbReference type="ChEBI" id="CHEBI:62192"/>
    </reaction>
</comment>
<comment type="subunit">
    <text evidence="1">NDH is composed of at least 16 different subunits, 5 of which are encoded in the nucleus.</text>
</comment>
<comment type="subcellular location">
    <subcellularLocation>
        <location evidence="1">Plastid</location>
        <location evidence="1">Chloroplast thylakoid membrane</location>
        <topology evidence="1">Multi-pass membrane protein</topology>
    </subcellularLocation>
</comment>
<comment type="RNA editing">
    <location>
        <position position="50" evidence="2"/>
    </location>
    <location>
        <position position="156" evidence="2"/>
    </location>
    <location>
        <position position="196" evidence="2"/>
    </location>
    <location>
        <position position="204" evidence="2"/>
    </location>
    <location>
        <position position="235" evidence="2"/>
    </location>
    <location>
        <position position="246" evidence="2"/>
    </location>
    <location>
        <position position="277" evidence="2"/>
    </location>
    <location>
        <position position="279" evidence="2"/>
    </location>
    <location>
        <position position="494" evidence="2"/>
    </location>
</comment>
<comment type="similarity">
    <text evidence="1">Belongs to the complex I subunit 2 family.</text>
</comment>
<gene>
    <name evidence="1" type="primary">ndhB2</name>
</gene>
<accession>P0CC73</accession>
<accession>A1E9N4</accession>
<accession>Q33532</accession>
<organism>
    <name type="scientific">Hordeum vulgare</name>
    <name type="common">Barley</name>
    <dbReference type="NCBI Taxonomy" id="4513"/>
    <lineage>
        <taxon>Eukaryota</taxon>
        <taxon>Viridiplantae</taxon>
        <taxon>Streptophyta</taxon>
        <taxon>Embryophyta</taxon>
        <taxon>Tracheophyta</taxon>
        <taxon>Spermatophyta</taxon>
        <taxon>Magnoliopsida</taxon>
        <taxon>Liliopsida</taxon>
        <taxon>Poales</taxon>
        <taxon>Poaceae</taxon>
        <taxon>BOP clade</taxon>
        <taxon>Pooideae</taxon>
        <taxon>Triticodae</taxon>
        <taxon>Triticeae</taxon>
        <taxon>Hordeinae</taxon>
        <taxon>Hordeum</taxon>
    </lineage>
</organism>
<dbReference type="EC" id="7.1.1.-" evidence="1"/>
<dbReference type="EMBL" id="EF115541">
    <property type="protein sequence ID" value="ABK79472.1"/>
    <property type="status" value="ALT_SEQ"/>
    <property type="molecule type" value="Genomic_DNA"/>
</dbReference>
<dbReference type="PIR" id="S65075">
    <property type="entry name" value="S65075"/>
</dbReference>
<dbReference type="PIR" id="S65076">
    <property type="entry name" value="S65076"/>
</dbReference>
<dbReference type="SMR" id="P0CC73"/>
<dbReference type="GO" id="GO:0009535">
    <property type="term" value="C:chloroplast thylakoid membrane"/>
    <property type="evidence" value="ECO:0007669"/>
    <property type="project" value="UniProtKB-SubCell"/>
</dbReference>
<dbReference type="GO" id="GO:0008137">
    <property type="term" value="F:NADH dehydrogenase (ubiquinone) activity"/>
    <property type="evidence" value="ECO:0007669"/>
    <property type="project" value="InterPro"/>
</dbReference>
<dbReference type="GO" id="GO:0048038">
    <property type="term" value="F:quinone binding"/>
    <property type="evidence" value="ECO:0007669"/>
    <property type="project" value="UniProtKB-KW"/>
</dbReference>
<dbReference type="GO" id="GO:0042773">
    <property type="term" value="P:ATP synthesis coupled electron transport"/>
    <property type="evidence" value="ECO:0007669"/>
    <property type="project" value="InterPro"/>
</dbReference>
<dbReference type="GO" id="GO:0019684">
    <property type="term" value="P:photosynthesis, light reaction"/>
    <property type="evidence" value="ECO:0007669"/>
    <property type="project" value="UniProtKB-UniRule"/>
</dbReference>
<dbReference type="HAMAP" id="MF_00445">
    <property type="entry name" value="NDH1_NuoN_1"/>
    <property type="match status" value="1"/>
</dbReference>
<dbReference type="InterPro" id="IPR010096">
    <property type="entry name" value="NADH-Q_OxRdtase_suN/2"/>
</dbReference>
<dbReference type="InterPro" id="IPR001750">
    <property type="entry name" value="ND/Mrp_TM"/>
</dbReference>
<dbReference type="InterPro" id="IPR045693">
    <property type="entry name" value="Ndh2_N"/>
</dbReference>
<dbReference type="NCBIfam" id="TIGR01770">
    <property type="entry name" value="NDH_I_N"/>
    <property type="match status" value="1"/>
</dbReference>
<dbReference type="NCBIfam" id="NF002701">
    <property type="entry name" value="PRK02504.1"/>
    <property type="match status" value="1"/>
</dbReference>
<dbReference type="PANTHER" id="PTHR22773">
    <property type="entry name" value="NADH DEHYDROGENASE"/>
    <property type="match status" value="1"/>
</dbReference>
<dbReference type="Pfam" id="PF19530">
    <property type="entry name" value="Ndh2_N"/>
    <property type="match status" value="1"/>
</dbReference>
<dbReference type="Pfam" id="PF00361">
    <property type="entry name" value="Proton_antipo_M"/>
    <property type="match status" value="1"/>
</dbReference>
<dbReference type="PRINTS" id="PR01434">
    <property type="entry name" value="NADHDHGNASE5"/>
</dbReference>
<reference key="1">
    <citation type="journal article" date="1995" name="Plant Mol. Biol.">
        <title>Editing of the chloroplast ndhB encoded transcript shows divergence between closely related members of the grass family (Poaceae).</title>
        <authorList>
            <person name="Freyer R."/>
            <person name="Lopez C."/>
            <person name="Maier R.M."/>
            <person name="Martin M."/>
            <person name="Sabater B."/>
            <person name="Koessel H."/>
        </authorList>
    </citation>
    <scope>NUCLEOTIDE SEQUENCE [GENOMIC DNA]</scope>
    <scope>RNA EDITING</scope>
</reference>
<reference key="2">
    <citation type="journal article" date="2007" name="Theor. Appl. Genet.">
        <title>Complete chloroplast genome sequences of Hordeum vulgare, Sorghum bicolor and Agrostis stolonifera, and comparative analyses with other grass genomes.</title>
        <authorList>
            <person name="Saski C."/>
            <person name="Lee S.-B."/>
            <person name="Fjellheim S."/>
            <person name="Guda C."/>
            <person name="Jansen R.K."/>
            <person name="Luo H."/>
            <person name="Tomkins J."/>
            <person name="Rognli O.A."/>
            <person name="Daniell H."/>
            <person name="Clarke J.L."/>
        </authorList>
    </citation>
    <scope>NUCLEOTIDE SEQUENCE [LARGE SCALE GENOMIC DNA]</scope>
    <source>
        <strain>cv. Morex</strain>
    </source>
</reference>
<keyword id="KW-0150">Chloroplast</keyword>
<keyword id="KW-0472">Membrane</keyword>
<keyword id="KW-0520">NAD</keyword>
<keyword id="KW-0521">NADP</keyword>
<keyword id="KW-0934">Plastid</keyword>
<keyword id="KW-0618">Plastoquinone</keyword>
<keyword id="KW-0874">Quinone</keyword>
<keyword id="KW-0691">RNA editing</keyword>
<keyword id="KW-0793">Thylakoid</keyword>
<keyword id="KW-1278">Translocase</keyword>
<keyword id="KW-0812">Transmembrane</keyword>
<keyword id="KW-1133">Transmembrane helix</keyword>
<keyword id="KW-0813">Transport</keyword>
<geneLocation type="chloroplast"/>
<evidence type="ECO:0000255" key="1">
    <source>
        <dbReference type="HAMAP-Rule" id="MF_00445"/>
    </source>
</evidence>
<evidence type="ECO:0000269" key="2">
    <source>
    </source>
</evidence>
<name>NU2C2_HORVU</name>
<protein>
    <recommendedName>
        <fullName evidence="1">NAD(P)H-quinone oxidoreductase subunit 2 B, chloroplastic</fullName>
        <ecNumber evidence="1">7.1.1.-</ecNumber>
    </recommendedName>
    <alternativeName>
        <fullName evidence="1">NAD(P)H dehydrogenase, subunit 2 B</fullName>
    </alternativeName>
    <alternativeName>
        <fullName evidence="1">NADH-plastoquinone oxidoreductase subunit 2 B</fullName>
    </alternativeName>
</protein>
<proteinExistence type="evidence at transcript level"/>